<proteinExistence type="inferred from homology"/>
<evidence type="ECO:0000255" key="1">
    <source>
        <dbReference type="HAMAP-Rule" id="MF_00436"/>
    </source>
</evidence>
<evidence type="ECO:0000255" key="2">
    <source>
        <dbReference type="PROSITE-ProRule" id="PRU01346"/>
    </source>
</evidence>
<evidence type="ECO:0000256" key="3">
    <source>
        <dbReference type="SAM" id="MobiDB-lite"/>
    </source>
</evidence>
<dbReference type="EMBL" id="CP000970">
    <property type="protein sequence ID" value="ACB17129.1"/>
    <property type="molecule type" value="Genomic_DNA"/>
</dbReference>
<dbReference type="RefSeq" id="WP_001051883.1">
    <property type="nucleotide sequence ID" value="NC_010498.1"/>
</dbReference>
<dbReference type="SMR" id="B1LQJ2"/>
<dbReference type="GeneID" id="93777649"/>
<dbReference type="KEGG" id="ecm:EcSMS35_4643"/>
<dbReference type="HOGENOM" id="CLU_113688_2_1_6"/>
<dbReference type="Proteomes" id="UP000007011">
    <property type="component" value="Chromosome"/>
</dbReference>
<dbReference type="GO" id="GO:0005829">
    <property type="term" value="C:cytosol"/>
    <property type="evidence" value="ECO:0007669"/>
    <property type="project" value="TreeGrafter"/>
</dbReference>
<dbReference type="GO" id="GO:0003723">
    <property type="term" value="F:RNA binding"/>
    <property type="evidence" value="ECO:0007669"/>
    <property type="project" value="UniProtKB-UniRule"/>
</dbReference>
<dbReference type="GO" id="GO:0006355">
    <property type="term" value="P:regulation of DNA-templated transcription"/>
    <property type="evidence" value="ECO:0007669"/>
    <property type="project" value="InterPro"/>
</dbReference>
<dbReference type="GO" id="GO:0043487">
    <property type="term" value="P:regulation of RNA stability"/>
    <property type="evidence" value="ECO:0007669"/>
    <property type="project" value="TreeGrafter"/>
</dbReference>
<dbReference type="GO" id="GO:0045974">
    <property type="term" value="P:regulation of translation, ncRNA-mediated"/>
    <property type="evidence" value="ECO:0007669"/>
    <property type="project" value="TreeGrafter"/>
</dbReference>
<dbReference type="CDD" id="cd01716">
    <property type="entry name" value="Hfq"/>
    <property type="match status" value="1"/>
</dbReference>
<dbReference type="FunFam" id="2.30.30.100:FF:000001">
    <property type="entry name" value="RNA-binding protein Hfq"/>
    <property type="match status" value="1"/>
</dbReference>
<dbReference type="Gene3D" id="2.30.30.100">
    <property type="match status" value="1"/>
</dbReference>
<dbReference type="HAMAP" id="MF_00436">
    <property type="entry name" value="Hfq"/>
    <property type="match status" value="1"/>
</dbReference>
<dbReference type="InterPro" id="IPR005001">
    <property type="entry name" value="Hfq"/>
</dbReference>
<dbReference type="InterPro" id="IPR010920">
    <property type="entry name" value="LSM_dom_sf"/>
</dbReference>
<dbReference type="InterPro" id="IPR047575">
    <property type="entry name" value="Sm"/>
</dbReference>
<dbReference type="NCBIfam" id="TIGR02383">
    <property type="entry name" value="Hfq"/>
    <property type="match status" value="1"/>
</dbReference>
<dbReference type="NCBIfam" id="NF001602">
    <property type="entry name" value="PRK00395.1"/>
    <property type="match status" value="1"/>
</dbReference>
<dbReference type="PANTHER" id="PTHR34772">
    <property type="entry name" value="RNA-BINDING PROTEIN HFQ"/>
    <property type="match status" value="1"/>
</dbReference>
<dbReference type="PANTHER" id="PTHR34772:SF1">
    <property type="entry name" value="RNA-BINDING PROTEIN HFQ"/>
    <property type="match status" value="1"/>
</dbReference>
<dbReference type="Pfam" id="PF17209">
    <property type="entry name" value="Hfq"/>
    <property type="match status" value="1"/>
</dbReference>
<dbReference type="SUPFAM" id="SSF50182">
    <property type="entry name" value="Sm-like ribonucleoproteins"/>
    <property type="match status" value="1"/>
</dbReference>
<dbReference type="PROSITE" id="PS52002">
    <property type="entry name" value="SM"/>
    <property type="match status" value="1"/>
</dbReference>
<organism>
    <name type="scientific">Escherichia coli (strain SMS-3-5 / SECEC)</name>
    <dbReference type="NCBI Taxonomy" id="439855"/>
    <lineage>
        <taxon>Bacteria</taxon>
        <taxon>Pseudomonadati</taxon>
        <taxon>Pseudomonadota</taxon>
        <taxon>Gammaproteobacteria</taxon>
        <taxon>Enterobacterales</taxon>
        <taxon>Enterobacteriaceae</taxon>
        <taxon>Escherichia</taxon>
    </lineage>
</organism>
<feature type="chain" id="PRO_1000190325" description="RNA-binding protein Hfq">
    <location>
        <begin position="1"/>
        <end position="102"/>
    </location>
</feature>
<feature type="domain" description="Sm" evidence="2">
    <location>
        <begin position="9"/>
        <end position="68"/>
    </location>
</feature>
<feature type="region of interest" description="Disordered" evidence="3">
    <location>
        <begin position="63"/>
        <end position="102"/>
    </location>
</feature>
<feature type="compositionally biased region" description="Polar residues" evidence="3">
    <location>
        <begin position="70"/>
        <end position="96"/>
    </location>
</feature>
<gene>
    <name evidence="1" type="primary">hfq</name>
    <name type="ordered locus">EcSMS35_4643</name>
</gene>
<name>HFQ_ECOSM</name>
<comment type="function">
    <text evidence="1">RNA chaperone that binds small regulatory RNA (sRNAs) and mRNAs to facilitate mRNA translational regulation in response to envelope stress, environmental stress and changes in metabolite concentrations. Also binds with high specificity to tRNAs.</text>
</comment>
<comment type="subunit">
    <text evidence="1">Homohexamer.</text>
</comment>
<comment type="similarity">
    <text evidence="1">Belongs to the Hfq family.</text>
</comment>
<sequence length="102" mass="11166">MAKGQSLQDPFLNALRRERVPVSIYLVNGIKLQGQIESFDQFVILLKNTVSQMVYKHAISTVVPSRPVSHHSNNAGGGTSSNYHHGSSAQNTSAQQDSEETE</sequence>
<keyword id="KW-0694">RNA-binding</keyword>
<keyword id="KW-0346">Stress response</keyword>
<reference key="1">
    <citation type="journal article" date="2008" name="J. Bacteriol.">
        <title>Insights into the environmental resistance gene pool from the genome sequence of the multidrug-resistant environmental isolate Escherichia coli SMS-3-5.</title>
        <authorList>
            <person name="Fricke W.F."/>
            <person name="Wright M.S."/>
            <person name="Lindell A.H."/>
            <person name="Harkins D.M."/>
            <person name="Baker-Austin C."/>
            <person name="Ravel J."/>
            <person name="Stepanauskas R."/>
        </authorList>
    </citation>
    <scope>NUCLEOTIDE SEQUENCE [LARGE SCALE GENOMIC DNA]</scope>
    <source>
        <strain>SMS-3-5 / SECEC</strain>
    </source>
</reference>
<protein>
    <recommendedName>
        <fullName evidence="1">RNA-binding protein Hfq</fullName>
    </recommendedName>
</protein>
<accession>B1LQJ2</accession>